<accession>A0A1L8GXM0</accession>
<accession>C4N9Q9</accession>
<organism>
    <name type="scientific">Xenopus laevis</name>
    <name type="common">African clawed frog</name>
    <dbReference type="NCBI Taxonomy" id="8355"/>
    <lineage>
        <taxon>Eukaryota</taxon>
        <taxon>Metazoa</taxon>
        <taxon>Chordata</taxon>
        <taxon>Craniata</taxon>
        <taxon>Vertebrata</taxon>
        <taxon>Euteleostomi</taxon>
        <taxon>Amphibia</taxon>
        <taxon>Batrachia</taxon>
        <taxon>Anura</taxon>
        <taxon>Pipoidea</taxon>
        <taxon>Pipidae</taxon>
        <taxon>Xenopodinae</taxon>
        <taxon>Xenopus</taxon>
        <taxon>Xenopus</taxon>
    </lineage>
</organism>
<comment type="function">
    <text evidence="3 4 7 8 9 10">Component of the MRN complex, which plays a central role in double-strand break (DSB) repair, DNA recombination, maintenance of telomere integrity and meiosis (PubMed:19892829, PubMed:23434370). The MRN complex is involved in the repair of DNA double-strand breaks (DSBs) via homologous recombination (HR), an error-free mechanism which primarily occurs during S and G2 phases (PubMed:19892829). The complex (1) mediates the end resection of damaged DNA, which generates proper single-stranded DNA, a key initial steps in HR, and is (2) required for the recruitment of other repair factors and efficient activation of ATM and ATR upon DNA damage (By similarity). The MRN complex possesses single-strand endonuclease activity and double-strand-specific 3'-5' exonuclease activity, which are provided by mre11, to initiate end resection, which is required for single-strand invasion and recombination (By similarity). Within the complex, rad50 is both required to bind DNA ends and hold them in close proximity and regulate the activity of MRE11 (By similarity). Rad50 provides an ATP-dependent control of MRE11 by positioning DNA ends into the mre11 active site: ATP-binding induces a large structural change from an open form with accessible MRE11 nuclease sites into a closed form (By similarity). The MRN complex is also required for DNA damage signaling via activation of the atm and atr kinases: the nuclease activity of mre11 is not required to activate ATM and ATR (By similarity). The MRN complex promotes recruitment of topbp1 to DNA damage sites (PubMed:19279141, PubMed:23582259). The MRN complex and rbbp8/CtIP are also required for chromosome alignment during metaphase (PubMed:23434370).</text>
</comment>
<comment type="catalytic activity">
    <reaction evidence="3">
        <text>ATP + H2O = ADP + phosphate + H(+)</text>
        <dbReference type="Rhea" id="RHEA:13065"/>
        <dbReference type="ChEBI" id="CHEBI:15377"/>
        <dbReference type="ChEBI" id="CHEBI:15378"/>
        <dbReference type="ChEBI" id="CHEBI:30616"/>
        <dbReference type="ChEBI" id="CHEBI:43474"/>
        <dbReference type="ChEBI" id="CHEBI:456216"/>
    </reaction>
</comment>
<comment type="cofactor">
    <cofactor evidence="3">
        <name>Zn(2+)</name>
        <dbReference type="ChEBI" id="CHEBI:29105"/>
    </cofactor>
    <text evidence="3">Binds 1 zinc ion per homodimer.</text>
</comment>
<comment type="subunit">
    <text evidence="9 10">Component of the MRN complex composed of two heterodimers RAD50 and MRE11 associated with a single NBN.</text>
</comment>
<comment type="subcellular location">
    <subcellularLocation>
        <location evidence="3">Nucleus</location>
    </subcellularLocation>
    <subcellularLocation>
        <location evidence="3">Chromosome</location>
        <location evidence="3">Telomere</location>
    </subcellularLocation>
    <subcellularLocation>
        <location evidence="3">Chromosome</location>
    </subcellularLocation>
    <text evidence="3">Localizes to discrete nuclear foci after treatment with genotoxic agents. Localizes to DNA double-strand breaks (DSBs).</text>
</comment>
<comment type="domain">
    <text evidence="2">The zinc-hook, which separates the large intramolecular coiled coil regions, contains 2 Cys residues that coordinate one molecule of zinc with the help of the 2 Cys residues of the zinc-hook of another RAD50 molecule, thereby forming a V-shaped homodimer. The two heads of the homodimer, which constitute the ATP-binding domain, interact with the MRE11 homodimer.</text>
</comment>
<comment type="similarity">
    <text evidence="11">Belongs to the SMC family. RAD50 subfamily.</text>
</comment>
<reference key="1">
    <citation type="journal article" date="2009" name="Mol. Biol. Cell">
        <title>The Mre11-Rad50-Nbs1 complex mediates activation of TopBP1 by ATM.</title>
        <authorList>
            <person name="Yoo H.Y."/>
            <person name="Kumagai A."/>
            <person name="Shevchenko A."/>
            <person name="Shevchenko A."/>
            <person name="Dunphy W.G."/>
        </authorList>
    </citation>
    <scope>NUCLEOTIDE SEQUENCE [MRNA]</scope>
    <scope>FUNCTION</scope>
</reference>
<reference key="2">
    <citation type="journal article" date="2016" name="Nature">
        <title>Genome evolution in the allotetraploid frog Xenopus laevis.</title>
        <authorList>
            <person name="Session A.M."/>
            <person name="Uno Y."/>
            <person name="Kwon T."/>
            <person name="Chapman J.A."/>
            <person name="Toyoda A."/>
            <person name="Takahashi S."/>
            <person name="Fukui A."/>
            <person name="Hikosaka A."/>
            <person name="Suzuki A."/>
            <person name="Kondo M."/>
            <person name="van Heeringen S.J."/>
            <person name="Quigley I."/>
            <person name="Heinz S."/>
            <person name="Ogino H."/>
            <person name="Ochi H."/>
            <person name="Hellsten U."/>
            <person name="Lyons J.B."/>
            <person name="Simakov O."/>
            <person name="Putnam N."/>
            <person name="Stites J."/>
            <person name="Kuroki Y."/>
            <person name="Tanaka T."/>
            <person name="Michiue T."/>
            <person name="Watanabe M."/>
            <person name="Bogdanovic O."/>
            <person name="Lister R."/>
            <person name="Georgiou G."/>
            <person name="Paranjpe S.S."/>
            <person name="van Kruijsbergen I."/>
            <person name="Shu S."/>
            <person name="Carlson J."/>
            <person name="Kinoshita T."/>
            <person name="Ohta Y."/>
            <person name="Mawaribuchi S."/>
            <person name="Jenkins J."/>
            <person name="Grimwood J."/>
            <person name="Schmutz J."/>
            <person name="Mitros T."/>
            <person name="Mozaffari S.V."/>
            <person name="Suzuki Y."/>
            <person name="Haramoto Y."/>
            <person name="Yamamoto T.S."/>
            <person name="Takagi C."/>
            <person name="Heald R."/>
            <person name="Miller K."/>
            <person name="Haudenschild C."/>
            <person name="Kitzman J."/>
            <person name="Nakayama T."/>
            <person name="Izutsu Y."/>
            <person name="Robert J."/>
            <person name="Fortriede J."/>
            <person name="Burns K."/>
            <person name="Lotay V."/>
            <person name="Karimi K."/>
            <person name="Yasuoka Y."/>
            <person name="Dichmann D.S."/>
            <person name="Flajnik M.F."/>
            <person name="Houston D.W."/>
            <person name="Shendure J."/>
            <person name="DuPasquier L."/>
            <person name="Vize P.D."/>
            <person name="Zorn A.M."/>
            <person name="Ito M."/>
            <person name="Marcotte E.M."/>
            <person name="Wallingford J.B."/>
            <person name="Ito Y."/>
            <person name="Asashima M."/>
            <person name="Ueno N."/>
            <person name="Matsuda Y."/>
            <person name="Veenstra G.J."/>
            <person name="Fujiyama A."/>
            <person name="Harland R.M."/>
            <person name="Taira M."/>
            <person name="Rokhsar D.S."/>
        </authorList>
    </citation>
    <scope>NUCLEOTIDE SEQUENCE [LARGE SCALE GENOMIC DNA]</scope>
    <source>
        <strain>J</strain>
    </source>
</reference>
<reference key="3">
    <citation type="journal article" date="2010" name="Nucleic Acids Res.">
        <title>The Mre11/Rad50/Nbs1 complex functions in resection-based DNA end joining in Xenopus laevis.</title>
        <authorList>
            <person name="Taylor E.M."/>
            <person name="Cecillon S.M."/>
            <person name="Bonis A."/>
            <person name="Chapman J.R."/>
            <person name="Povirk L.F."/>
            <person name="Lindsay H.D."/>
        </authorList>
    </citation>
    <scope>FUNCTION</scope>
</reference>
<reference key="4">
    <citation type="journal article" date="2013" name="Mol. Cell">
        <title>The MRN-CtIP pathway is required for metaphase chromosome alignment.</title>
        <authorList>
            <person name="Rozier L."/>
            <person name="Guo Y."/>
            <person name="Peterson S."/>
            <person name="Sato M."/>
            <person name="Baer R."/>
            <person name="Gautier J."/>
            <person name="Mao Y."/>
        </authorList>
    </citation>
    <scope>FUNCTION</scope>
    <scope>IDENTIFICATION IN THE MRN COMPLEX</scope>
</reference>
<reference key="5">
    <citation type="journal article" date="2013" name="Mol. Cell">
        <title>A role for the MRN complex in ATR activation via TOPBP1 recruitment.</title>
        <authorList>
            <person name="Duursma A.M."/>
            <person name="Driscoll R."/>
            <person name="Elias J.E."/>
            <person name="Cimprich K.A."/>
        </authorList>
    </citation>
    <scope>FUNCTION</scope>
    <scope>IDENTIFICATION IN THE MRN COMPLEX</scope>
</reference>
<dbReference type="EC" id="3.6.-.-" evidence="3"/>
<dbReference type="EMBL" id="FJ436027">
    <property type="protein sequence ID" value="ACN56470.1"/>
    <property type="molecule type" value="mRNA"/>
</dbReference>
<dbReference type="RefSeq" id="NP_001154855.1">
    <property type="nucleotide sequence ID" value="NM_001161383.1"/>
</dbReference>
<dbReference type="RefSeq" id="XP_018106608.1">
    <property type="nucleotide sequence ID" value="XM_018251119.2"/>
</dbReference>
<dbReference type="RefSeq" id="XP_018106609.1">
    <property type="nucleotide sequence ID" value="XM_018251120.1"/>
</dbReference>
<dbReference type="RefSeq" id="XP_018106610.1">
    <property type="nucleotide sequence ID" value="XM_018251121.2"/>
</dbReference>
<dbReference type="RefSeq" id="XP_018106611.1">
    <property type="nucleotide sequence ID" value="XM_018251122.1"/>
</dbReference>
<dbReference type="SMR" id="A0A1L8GXM0"/>
<dbReference type="IntAct" id="A0A1L8GXM0">
    <property type="interactions" value="1"/>
</dbReference>
<dbReference type="STRING" id="8355.A0A1L8GXM0"/>
<dbReference type="PaxDb" id="8355-A0A1L8GXM0"/>
<dbReference type="GeneID" id="495064"/>
<dbReference type="KEGG" id="xla:495064"/>
<dbReference type="AGR" id="Xenbase:XB-GENE-1007573"/>
<dbReference type="CTD" id="495064"/>
<dbReference type="Xenbase" id="XB-GENE-1007573">
    <property type="gene designation" value="rad50.L"/>
</dbReference>
<dbReference type="OMA" id="FSDYYYR"/>
<dbReference type="OrthoDB" id="18797at2759"/>
<dbReference type="Proteomes" id="UP000186698">
    <property type="component" value="Chromosome 3L"/>
</dbReference>
<dbReference type="Bgee" id="495064">
    <property type="expression patterns" value="Expressed in testis and 19 other cell types or tissues"/>
</dbReference>
<dbReference type="GO" id="GO:0000781">
    <property type="term" value="C:chromosome, telomeric region"/>
    <property type="evidence" value="ECO:0007669"/>
    <property type="project" value="UniProtKB-SubCell"/>
</dbReference>
<dbReference type="GO" id="GO:0000794">
    <property type="term" value="C:condensed nuclear chromosome"/>
    <property type="evidence" value="ECO:0000318"/>
    <property type="project" value="GO_Central"/>
</dbReference>
<dbReference type="GO" id="GO:0030870">
    <property type="term" value="C:Mre11 complex"/>
    <property type="evidence" value="ECO:0000314"/>
    <property type="project" value="UniProtKB"/>
</dbReference>
<dbReference type="GO" id="GO:0035861">
    <property type="term" value="C:site of double-strand break"/>
    <property type="evidence" value="ECO:0000250"/>
    <property type="project" value="UniProtKB"/>
</dbReference>
<dbReference type="GO" id="GO:0005524">
    <property type="term" value="F:ATP binding"/>
    <property type="evidence" value="ECO:0007669"/>
    <property type="project" value="UniProtKB-KW"/>
</dbReference>
<dbReference type="GO" id="GO:0016887">
    <property type="term" value="F:ATP hydrolysis activity"/>
    <property type="evidence" value="ECO:0007669"/>
    <property type="project" value="InterPro"/>
</dbReference>
<dbReference type="GO" id="GO:0003691">
    <property type="term" value="F:double-stranded telomeric DNA binding"/>
    <property type="evidence" value="ECO:0000318"/>
    <property type="project" value="GO_Central"/>
</dbReference>
<dbReference type="GO" id="GO:0051880">
    <property type="term" value="F:G-quadruplex DNA binding"/>
    <property type="evidence" value="ECO:0000318"/>
    <property type="project" value="GO_Central"/>
</dbReference>
<dbReference type="GO" id="GO:0046872">
    <property type="term" value="F:metal ion binding"/>
    <property type="evidence" value="ECO:0007669"/>
    <property type="project" value="UniProtKB-KW"/>
</dbReference>
<dbReference type="GO" id="GO:0043539">
    <property type="term" value="F:protein serine/threonine kinase activator activity"/>
    <property type="evidence" value="ECO:0000250"/>
    <property type="project" value="UniProtKB"/>
</dbReference>
<dbReference type="GO" id="GO:0043047">
    <property type="term" value="F:single-stranded telomeric DNA binding"/>
    <property type="evidence" value="ECO:0000318"/>
    <property type="project" value="GO_Central"/>
</dbReference>
<dbReference type="GO" id="GO:0070192">
    <property type="term" value="P:chromosome organization involved in meiotic cell cycle"/>
    <property type="evidence" value="ECO:0000318"/>
    <property type="project" value="GO_Central"/>
</dbReference>
<dbReference type="GO" id="GO:0000729">
    <property type="term" value="P:DNA double-strand break processing"/>
    <property type="evidence" value="ECO:0000250"/>
    <property type="project" value="UniProtKB"/>
</dbReference>
<dbReference type="GO" id="GO:0110025">
    <property type="term" value="P:DNA strand resection involved in replication fork processing"/>
    <property type="evidence" value="ECO:0000314"/>
    <property type="project" value="UniProtKB"/>
</dbReference>
<dbReference type="GO" id="GO:0006302">
    <property type="term" value="P:double-strand break repair"/>
    <property type="evidence" value="ECO:0000318"/>
    <property type="project" value="GO_Central"/>
</dbReference>
<dbReference type="GO" id="GO:0051310">
    <property type="term" value="P:metaphase chromosome alignment"/>
    <property type="evidence" value="ECO:0000314"/>
    <property type="project" value="UniProtKB"/>
</dbReference>
<dbReference type="GO" id="GO:0062176">
    <property type="term" value="P:R-loop processing"/>
    <property type="evidence" value="ECO:0000250"/>
    <property type="project" value="UniProtKB"/>
</dbReference>
<dbReference type="GO" id="GO:0000722">
    <property type="term" value="P:telomere maintenance via recombination"/>
    <property type="evidence" value="ECO:0000318"/>
    <property type="project" value="GO_Central"/>
</dbReference>
<dbReference type="GO" id="GO:0007004">
    <property type="term" value="P:telomere maintenance via telomerase"/>
    <property type="evidence" value="ECO:0000318"/>
    <property type="project" value="GO_Central"/>
</dbReference>
<dbReference type="FunFam" id="3.40.50.300:FF:001037">
    <property type="entry name" value="DNA repair protein RAD50"/>
    <property type="match status" value="1"/>
</dbReference>
<dbReference type="FunFam" id="3.40.50.300:FF:001065">
    <property type="entry name" value="DNA repair protein RAD50 isoform X1"/>
    <property type="match status" value="1"/>
</dbReference>
<dbReference type="Gene3D" id="1.10.287.1490">
    <property type="match status" value="1"/>
</dbReference>
<dbReference type="Gene3D" id="3.40.50.300">
    <property type="entry name" value="P-loop containing nucleotide triphosphate hydrolases"/>
    <property type="match status" value="2"/>
</dbReference>
<dbReference type="InterPro" id="IPR027417">
    <property type="entry name" value="P-loop_NTPase"/>
</dbReference>
<dbReference type="InterPro" id="IPR038729">
    <property type="entry name" value="Rad50/SbcC_AAA"/>
</dbReference>
<dbReference type="InterPro" id="IPR004584">
    <property type="entry name" value="Rad50_eukaryotes"/>
</dbReference>
<dbReference type="InterPro" id="IPR013134">
    <property type="entry name" value="Zn_hook_RAD50"/>
</dbReference>
<dbReference type="NCBIfam" id="TIGR00606">
    <property type="entry name" value="rad50"/>
    <property type="match status" value="1"/>
</dbReference>
<dbReference type="PANTHER" id="PTHR18867:SF12">
    <property type="entry name" value="DNA REPAIR PROTEIN RAD50"/>
    <property type="match status" value="1"/>
</dbReference>
<dbReference type="PANTHER" id="PTHR18867">
    <property type="entry name" value="RAD50"/>
    <property type="match status" value="1"/>
</dbReference>
<dbReference type="Pfam" id="PF13476">
    <property type="entry name" value="AAA_23"/>
    <property type="match status" value="1"/>
</dbReference>
<dbReference type="Pfam" id="PF04423">
    <property type="entry name" value="Rad50_zn_hook"/>
    <property type="match status" value="1"/>
</dbReference>
<dbReference type="Pfam" id="PF13558">
    <property type="entry name" value="SbcC_Walker_B"/>
    <property type="match status" value="1"/>
</dbReference>
<dbReference type="SUPFAM" id="SSF52540">
    <property type="entry name" value="P-loop containing nucleoside triphosphate hydrolases"/>
    <property type="match status" value="1"/>
</dbReference>
<dbReference type="PROSITE" id="PS51131">
    <property type="entry name" value="ZN_HOOK"/>
    <property type="match status" value="1"/>
</dbReference>
<sequence length="1312" mass="153910">MSKIEKMSIQGVRSFGIEDKNKQVIQFFTPLTVLVGPNGAGKTTIIECLKYITTGDFPPGSKGKTFVHDPKVAHETDVRAQIRLQLKDVNGELVAVQRSMICTQKGKSTEFKTLEGVITRIKHGEKVSLSTKCAEMDKEMISALGVSAAVLNNVIFCHQEDSNWPLSEGRQLKVKFDEIFSATRYIKALETLKKVRTQQAHNVREYQVEIKYLKQNKEKAREIQDNLQSKEKQLAVSKENVKSIESQLEPLKDRLADIQRNLSKVMRLDNEIKALESRKRTMEQDNQDLEEKMEKVFQGTDEELNGMYQNHQRSVREKERKLNDQQREMDRACKESQRLNREKGELLVQQGRLQLEADHHQQYIKTRDSLIKSLAAQLELDGFERTPFNQRQTSNFQMLVKERQEKDEAHANQILREFSEREAMKQRQLDEMRDKKTGLERTIELKSSTQSKKHTDLKNVKYELQQLEGSSDRLQELDEELQKTERELENVEKSCNLEALRGEVLQLQNQKSELDRNVRKLDQEMEQMNTHTMTRTQMDMLKKDKADKDEQIRKIKSRHNDELSLLLGYFPNKKQLEDWLYSKRKDINQTRDKLARLTKELVAAEQNKNHLSNELRRKEEQSASFEEKVFDVCGSQDFDSDLSRLQDDIEKTSKQRAMLAGATAVYTQFITTLTEENQPCCPVCQRIFPSEAELQDVINDMQSKLRLVPDKLKSAEGELKRKEKRKDDMMELKPMRQMLADLKEKEIPEIRNKLVTINREIQRLKNDVDEQETLIATFASEEESAKACLQDISLMERYQMELRDVERKIAQYATKLQGVDLNRTVQQVSQEKQEKQHNLDNVSGKIELLRKRIQDQQEQVQQLKSAVNELTAEKLHISSNLQRRQQLEDQNVELTTELQCLAREIKEAREQLFPLESTLQKLQQEKQELLQRKESSYREAQEKVNDIKEKVKKINLLTKDIEKYSQDGKEEFKEQKESELQELIGRLNECEKLKEKVNREMVTIRQDIDTQKIQERCLQDNLTLRKRIEELKRVEEERHQLLKEMGQMKVVQMKNEYQELENKSESLKTNHSLALGRQKGFEDEILRFKKELRESQYKEAEEKYREKMIVMRTTELAIKDLDIYYKTLDQAIMKYHSIKMEEINKIVRDLWRSTYRSQDIEYIEIQSDADESVTAADKRRTYNYRVVMIKGDTALDMRGRCSAGQKVLASLIIRLALAETFCLNCGILALDEPTTNLDRENIESLAHALVEIIKSRSRQRNFQLIVITHDEDFVELLGRSEYVEHFYRIKKNIDQCSEIIRCSVNSLASYVH</sequence>
<feature type="chain" id="PRO_0000460319" description="DNA repair protein RAD50.L">
    <location>
        <begin position="1"/>
        <end position="1312"/>
    </location>
</feature>
<feature type="domain" description="Zinc-hook" evidence="6">
    <location>
        <begin position="635"/>
        <end position="734"/>
    </location>
</feature>
<feature type="coiled-coil region" evidence="5">
    <location>
        <begin position="203"/>
        <end position="342"/>
    </location>
</feature>
<feature type="coiled-coil region" evidence="5">
    <location>
        <begin position="415"/>
        <end position="558"/>
    </location>
</feature>
<feature type="coiled-coil region" evidence="5">
    <location>
        <begin position="587"/>
        <end position="628"/>
    </location>
</feature>
<feature type="coiled-coil region" evidence="5">
    <location>
        <begin position="712"/>
        <end position="1070"/>
    </location>
</feature>
<feature type="binding site" evidence="1">
    <location>
        <position position="13"/>
    </location>
    <ligand>
        <name>ATP</name>
        <dbReference type="ChEBI" id="CHEBI:30616"/>
    </ligand>
</feature>
<feature type="binding site" evidence="1">
    <location>
        <position position="38"/>
    </location>
    <ligand>
        <name>ATP</name>
        <dbReference type="ChEBI" id="CHEBI:30616"/>
    </ligand>
</feature>
<feature type="binding site" evidence="1">
    <location>
        <position position="39"/>
    </location>
    <ligand>
        <name>ATP</name>
        <dbReference type="ChEBI" id="CHEBI:30616"/>
    </ligand>
</feature>
<feature type="binding site" evidence="1">
    <location>
        <position position="41"/>
    </location>
    <ligand>
        <name>ATP</name>
        <dbReference type="ChEBI" id="CHEBI:30616"/>
    </ligand>
</feature>
<feature type="binding site" evidence="1">
    <location>
        <position position="42"/>
    </location>
    <ligand>
        <name>ATP</name>
        <dbReference type="ChEBI" id="CHEBI:30616"/>
    </ligand>
</feature>
<feature type="binding site" evidence="1">
    <location>
        <position position="43"/>
    </location>
    <ligand>
        <name>ATP</name>
        <dbReference type="ChEBI" id="CHEBI:30616"/>
    </ligand>
</feature>
<feature type="binding site" evidence="1">
    <location>
        <position position="43"/>
    </location>
    <ligand>
        <name>Mg(2+)</name>
        <dbReference type="ChEBI" id="CHEBI:18420"/>
    </ligand>
</feature>
<feature type="binding site" evidence="1">
    <location>
        <position position="44"/>
    </location>
    <ligand>
        <name>ATP</name>
        <dbReference type="ChEBI" id="CHEBI:30616"/>
    </ligand>
</feature>
<feature type="binding site" evidence="1">
    <location>
        <position position="67"/>
    </location>
    <ligand>
        <name>ATP</name>
        <dbReference type="ChEBI" id="CHEBI:30616"/>
    </ligand>
</feature>
<feature type="binding site" evidence="1">
    <location>
        <position position="69"/>
    </location>
    <ligand>
        <name>ATP</name>
        <dbReference type="ChEBI" id="CHEBI:30616"/>
    </ligand>
</feature>
<feature type="binding site" evidence="1">
    <location>
        <position position="159"/>
    </location>
    <ligand>
        <name>ATP</name>
        <dbReference type="ChEBI" id="CHEBI:30616"/>
    </ligand>
</feature>
<feature type="binding site" evidence="1">
    <location>
        <position position="159"/>
    </location>
    <ligand>
        <name>Mg(2+)</name>
        <dbReference type="ChEBI" id="CHEBI:18420"/>
    </ligand>
</feature>
<feature type="binding site" evidence="6">
    <location>
        <position position="681"/>
    </location>
    <ligand>
        <name>Zn(2+)</name>
        <dbReference type="ChEBI" id="CHEBI:29105"/>
    </ligand>
</feature>
<feature type="binding site" evidence="6">
    <location>
        <position position="684"/>
    </location>
    <ligand>
        <name>Zn(2+)</name>
        <dbReference type="ChEBI" id="CHEBI:29105"/>
    </ligand>
</feature>
<feature type="sequence conflict" description="In Ref. 1; ACN56470." evidence="11" ref="1">
    <original>Y</original>
    <variation>N</variation>
    <location>
        <position position="212"/>
    </location>
</feature>
<feature type="sequence conflict" description="In Ref. 1; ACN56470." evidence="11" ref="1">
    <original>R</original>
    <variation>C</variation>
    <location>
        <position position="823"/>
    </location>
</feature>
<feature type="sequence conflict" description="In Ref. 1; ACN56470." evidence="11" ref="1">
    <original>D</original>
    <variation>E</variation>
    <location>
        <position position="889"/>
    </location>
</feature>
<feature type="sequence conflict" description="In Ref. 1; ACN56470." evidence="11" ref="1">
    <original>RE</original>
    <variation>EG</variation>
    <location>
        <begin position="1093"/>
        <end position="1094"/>
    </location>
</feature>
<feature type="sequence conflict" description="In Ref. 1; ACN56470." evidence="11" ref="1">
    <original>N</original>
    <variation>S</variation>
    <location>
        <position position="1305"/>
    </location>
</feature>
<keyword id="KW-0067">ATP-binding</keyword>
<keyword id="KW-0158">Chromosome</keyword>
<keyword id="KW-0175">Coiled coil</keyword>
<keyword id="KW-0227">DNA damage</keyword>
<keyword id="KW-0234">DNA repair</keyword>
<keyword id="KW-0378">Hydrolase</keyword>
<keyword id="KW-0460">Magnesium</keyword>
<keyword id="KW-0469">Meiosis</keyword>
<keyword id="KW-0479">Metal-binding</keyword>
<keyword id="KW-0547">Nucleotide-binding</keyword>
<keyword id="KW-0539">Nucleus</keyword>
<keyword id="KW-1185">Reference proteome</keyword>
<keyword id="KW-0779">Telomere</keyword>
<keyword id="KW-0862">Zinc</keyword>
<protein>
    <recommendedName>
        <fullName>DNA repair protein RAD50.L</fullName>
        <ecNumber evidence="3">3.6.-.-</ecNumber>
    </recommendedName>
</protein>
<evidence type="ECO:0000250" key="1">
    <source>
        <dbReference type="UniProtKB" id="G0SHW7"/>
    </source>
</evidence>
<evidence type="ECO:0000250" key="2">
    <source>
        <dbReference type="UniProtKB" id="P58301"/>
    </source>
</evidence>
<evidence type="ECO:0000250" key="3">
    <source>
        <dbReference type="UniProtKB" id="Q92878"/>
    </source>
</evidence>
<evidence type="ECO:0000250" key="4">
    <source>
        <dbReference type="UniProtKB" id="Q9X1X1"/>
    </source>
</evidence>
<evidence type="ECO:0000255" key="5"/>
<evidence type="ECO:0000255" key="6">
    <source>
        <dbReference type="PROSITE-ProRule" id="PRU00471"/>
    </source>
</evidence>
<evidence type="ECO:0000269" key="7">
    <source>
    </source>
</evidence>
<evidence type="ECO:0000269" key="8">
    <source>
    </source>
</evidence>
<evidence type="ECO:0000269" key="9">
    <source>
    </source>
</evidence>
<evidence type="ECO:0000269" key="10">
    <source>
    </source>
</evidence>
<evidence type="ECO:0000305" key="11"/>
<evidence type="ECO:0000312" key="12">
    <source>
        <dbReference type="Xenbase" id="XB-GENE-1007573"/>
    </source>
</evidence>
<gene>
    <name evidence="12" type="primary">rad50.L</name>
</gene>
<name>RA50L_XENLA</name>
<proteinExistence type="evidence at protein level"/>